<dbReference type="EC" id="2.1.2.9" evidence="1"/>
<dbReference type="EMBL" id="AE004969">
    <property type="protein sequence ID" value="AAW90490.1"/>
    <property type="molecule type" value="Genomic_DNA"/>
</dbReference>
<dbReference type="RefSeq" id="WP_003697690.1">
    <property type="nucleotide sequence ID" value="NC_002946.2"/>
</dbReference>
<dbReference type="RefSeq" id="YP_208902.1">
    <property type="nucleotide sequence ID" value="NC_002946.2"/>
</dbReference>
<dbReference type="SMR" id="Q5F5P7"/>
<dbReference type="STRING" id="242231.NGO_1870"/>
<dbReference type="KEGG" id="ngo:NGO_1870"/>
<dbReference type="PATRIC" id="fig|242231.10.peg.2248"/>
<dbReference type="HOGENOM" id="CLU_033347_1_2_4"/>
<dbReference type="Proteomes" id="UP000000535">
    <property type="component" value="Chromosome"/>
</dbReference>
<dbReference type="GO" id="GO:0005829">
    <property type="term" value="C:cytosol"/>
    <property type="evidence" value="ECO:0007669"/>
    <property type="project" value="TreeGrafter"/>
</dbReference>
<dbReference type="GO" id="GO:0004479">
    <property type="term" value="F:methionyl-tRNA formyltransferase activity"/>
    <property type="evidence" value="ECO:0007669"/>
    <property type="project" value="UniProtKB-UniRule"/>
</dbReference>
<dbReference type="CDD" id="cd08646">
    <property type="entry name" value="FMT_core_Met-tRNA-FMT_N"/>
    <property type="match status" value="1"/>
</dbReference>
<dbReference type="CDD" id="cd08704">
    <property type="entry name" value="Met_tRNA_FMT_C"/>
    <property type="match status" value="1"/>
</dbReference>
<dbReference type="FunFam" id="3.40.50.12230:FF:000001">
    <property type="entry name" value="Methionyl-tRNA formyltransferase"/>
    <property type="match status" value="1"/>
</dbReference>
<dbReference type="Gene3D" id="3.40.50.12230">
    <property type="match status" value="1"/>
</dbReference>
<dbReference type="HAMAP" id="MF_00182">
    <property type="entry name" value="Formyl_trans"/>
    <property type="match status" value="1"/>
</dbReference>
<dbReference type="InterPro" id="IPR005794">
    <property type="entry name" value="Fmt"/>
</dbReference>
<dbReference type="InterPro" id="IPR005793">
    <property type="entry name" value="Formyl_trans_C"/>
</dbReference>
<dbReference type="InterPro" id="IPR002376">
    <property type="entry name" value="Formyl_transf_N"/>
</dbReference>
<dbReference type="InterPro" id="IPR036477">
    <property type="entry name" value="Formyl_transf_N_sf"/>
</dbReference>
<dbReference type="InterPro" id="IPR011034">
    <property type="entry name" value="Formyl_transferase-like_C_sf"/>
</dbReference>
<dbReference type="InterPro" id="IPR001555">
    <property type="entry name" value="GART_AS"/>
</dbReference>
<dbReference type="InterPro" id="IPR044135">
    <property type="entry name" value="Met-tRNA-FMT_C"/>
</dbReference>
<dbReference type="InterPro" id="IPR041711">
    <property type="entry name" value="Met-tRNA-FMT_N"/>
</dbReference>
<dbReference type="NCBIfam" id="TIGR00460">
    <property type="entry name" value="fmt"/>
    <property type="match status" value="1"/>
</dbReference>
<dbReference type="PANTHER" id="PTHR11138">
    <property type="entry name" value="METHIONYL-TRNA FORMYLTRANSFERASE"/>
    <property type="match status" value="1"/>
</dbReference>
<dbReference type="PANTHER" id="PTHR11138:SF5">
    <property type="entry name" value="METHIONYL-TRNA FORMYLTRANSFERASE, MITOCHONDRIAL"/>
    <property type="match status" value="1"/>
</dbReference>
<dbReference type="Pfam" id="PF02911">
    <property type="entry name" value="Formyl_trans_C"/>
    <property type="match status" value="1"/>
</dbReference>
<dbReference type="Pfam" id="PF00551">
    <property type="entry name" value="Formyl_trans_N"/>
    <property type="match status" value="1"/>
</dbReference>
<dbReference type="SUPFAM" id="SSF50486">
    <property type="entry name" value="FMT C-terminal domain-like"/>
    <property type="match status" value="1"/>
</dbReference>
<dbReference type="SUPFAM" id="SSF53328">
    <property type="entry name" value="Formyltransferase"/>
    <property type="match status" value="1"/>
</dbReference>
<dbReference type="PROSITE" id="PS00373">
    <property type="entry name" value="GART"/>
    <property type="match status" value="1"/>
</dbReference>
<comment type="function">
    <text evidence="1">Attaches a formyl group to the free amino group of methionyl-tRNA(fMet). The formyl group appears to play a dual role in the initiator identity of N-formylmethionyl-tRNA by promoting its recognition by IF2 and preventing the misappropriation of this tRNA by the elongation apparatus.</text>
</comment>
<comment type="catalytic activity">
    <reaction evidence="1">
        <text>L-methionyl-tRNA(fMet) + (6R)-10-formyltetrahydrofolate = N-formyl-L-methionyl-tRNA(fMet) + (6S)-5,6,7,8-tetrahydrofolate + H(+)</text>
        <dbReference type="Rhea" id="RHEA:24380"/>
        <dbReference type="Rhea" id="RHEA-COMP:9952"/>
        <dbReference type="Rhea" id="RHEA-COMP:9953"/>
        <dbReference type="ChEBI" id="CHEBI:15378"/>
        <dbReference type="ChEBI" id="CHEBI:57453"/>
        <dbReference type="ChEBI" id="CHEBI:78530"/>
        <dbReference type="ChEBI" id="CHEBI:78844"/>
        <dbReference type="ChEBI" id="CHEBI:195366"/>
        <dbReference type="EC" id="2.1.2.9"/>
    </reaction>
</comment>
<comment type="similarity">
    <text evidence="1">Belongs to the Fmt family.</text>
</comment>
<feature type="chain" id="PRO_0000083002" description="Methionyl-tRNA formyltransferase">
    <location>
        <begin position="1"/>
        <end position="308"/>
    </location>
</feature>
<feature type="binding site" evidence="1">
    <location>
        <begin position="110"/>
        <end position="113"/>
    </location>
    <ligand>
        <name>(6S)-5,6,7,8-tetrahydrofolate</name>
        <dbReference type="ChEBI" id="CHEBI:57453"/>
    </ligand>
</feature>
<organism>
    <name type="scientific">Neisseria gonorrhoeae (strain ATCC 700825 / FA 1090)</name>
    <dbReference type="NCBI Taxonomy" id="242231"/>
    <lineage>
        <taxon>Bacteria</taxon>
        <taxon>Pseudomonadati</taxon>
        <taxon>Pseudomonadota</taxon>
        <taxon>Betaproteobacteria</taxon>
        <taxon>Neisseriales</taxon>
        <taxon>Neisseriaceae</taxon>
        <taxon>Neisseria</taxon>
    </lineage>
</organism>
<accession>Q5F5P7</accession>
<evidence type="ECO:0000255" key="1">
    <source>
        <dbReference type="HAMAP-Rule" id="MF_00182"/>
    </source>
</evidence>
<reference key="1">
    <citation type="submission" date="2003-03" db="EMBL/GenBank/DDBJ databases">
        <title>The complete genome sequence of Neisseria gonorrhoeae.</title>
        <authorList>
            <person name="Lewis L.A."/>
            <person name="Gillaspy A.F."/>
            <person name="McLaughlin R.E."/>
            <person name="Gipson M."/>
            <person name="Ducey T.F."/>
            <person name="Ownbey T."/>
            <person name="Hartman K."/>
            <person name="Nydick C."/>
            <person name="Carson M.B."/>
            <person name="Vaughn J."/>
            <person name="Thomson C."/>
            <person name="Song L."/>
            <person name="Lin S."/>
            <person name="Yuan X."/>
            <person name="Najar F."/>
            <person name="Zhan M."/>
            <person name="Ren Q."/>
            <person name="Zhu H."/>
            <person name="Qi S."/>
            <person name="Kenton S.M."/>
            <person name="Lai H."/>
            <person name="White J.D."/>
            <person name="Clifton S."/>
            <person name="Roe B.A."/>
            <person name="Dyer D.W."/>
        </authorList>
    </citation>
    <scope>NUCLEOTIDE SEQUENCE [LARGE SCALE GENOMIC DNA]</scope>
    <source>
        <strain>ATCC 700825 / FA 1090</strain>
    </source>
</reference>
<name>FMT_NEIG1</name>
<gene>
    <name evidence="1" type="primary">fmt</name>
    <name type="ordered locus">NGO_1870</name>
</gene>
<sequence>MKVIFAGTPDFAAAALKAVAAAGFEIPLVLTQPDRPKGRGMQLTAPPVKQAALELGLRVAQPEKLRNNAEALQMLKEVEADVMVVAAYGLILPQEVLDTPKHGCLNIHASLLPRWRGAAPIQRAIEAGDAETGVCIMQMDIGLDTGDVVSEHRYAIQPTDTANEVHDALMEIGAAAVVADLQQLQSKGRLNAVKQPEEGVTYAQKLSKEEARIDWSESADIIERKIRAFNPVPAAWVEYQGKPMKIRRAEVVAQQGTAGEVLSCSADGLVVACGESALKITELQPAGGRRMNIAAFAAGRSIEAGAKL</sequence>
<keyword id="KW-0648">Protein biosynthesis</keyword>
<keyword id="KW-1185">Reference proteome</keyword>
<keyword id="KW-0808">Transferase</keyword>
<protein>
    <recommendedName>
        <fullName evidence="1">Methionyl-tRNA formyltransferase</fullName>
        <ecNumber evidence="1">2.1.2.9</ecNumber>
    </recommendedName>
</protein>
<proteinExistence type="inferred from homology"/>